<name>CB21_WHEAT</name>
<accession>P04784</accession>
<organism>
    <name type="scientific">Triticum aestivum</name>
    <name type="common">Wheat</name>
    <dbReference type="NCBI Taxonomy" id="4565"/>
    <lineage>
        <taxon>Eukaryota</taxon>
        <taxon>Viridiplantae</taxon>
        <taxon>Streptophyta</taxon>
        <taxon>Embryophyta</taxon>
        <taxon>Tracheophyta</taxon>
        <taxon>Spermatophyta</taxon>
        <taxon>Magnoliopsida</taxon>
        <taxon>Liliopsida</taxon>
        <taxon>Poales</taxon>
        <taxon>Poaceae</taxon>
        <taxon>BOP clade</taxon>
        <taxon>Pooideae</taxon>
        <taxon>Triticodae</taxon>
        <taxon>Triticeae</taxon>
        <taxon>Triticinae</taxon>
        <taxon>Triticum</taxon>
    </lineage>
</organism>
<proteinExistence type="inferred from homology"/>
<evidence type="ECO:0000250" key="1"/>
<evidence type="ECO:0000250" key="2">
    <source>
        <dbReference type="UniProtKB" id="P07371"/>
    </source>
</evidence>
<evidence type="ECO:0000250" key="3">
    <source>
        <dbReference type="UniProtKB" id="P12333"/>
    </source>
</evidence>
<evidence type="ECO:0000255" key="4"/>
<evidence type="ECO:0000305" key="5"/>
<feature type="transit peptide" description="Chloroplast" evidence="5">
    <location>
        <begin position="1"/>
        <end position="34"/>
    </location>
</feature>
<feature type="chain" id="PRO_0000003707" description="Chlorophyll a-b binding protein, chloroplastic">
    <location>
        <begin position="35"/>
        <end position="266"/>
    </location>
</feature>
<feature type="transmembrane region" description="Helical" evidence="4">
    <location>
        <begin position="100"/>
        <end position="120"/>
    </location>
</feature>
<feature type="transmembrane region" description="Helical" evidence="4">
    <location>
        <begin position="152"/>
        <end position="172"/>
    </location>
</feature>
<feature type="transmembrane region" description="Helical" evidence="4">
    <location>
        <begin position="220"/>
        <end position="240"/>
    </location>
</feature>
<feature type="binding site" description="axial binding residue" evidence="3">
    <location>
        <position position="58"/>
    </location>
    <ligand>
        <name>chlorophyll b</name>
        <dbReference type="ChEBI" id="CHEBI:61721"/>
        <label>1</label>
    </ligand>
    <ligandPart>
        <name>Mg</name>
        <dbReference type="ChEBI" id="CHEBI:25107"/>
    </ligandPart>
</feature>
<feature type="binding site" evidence="1">
    <location>
        <position position="80"/>
    </location>
    <ligand>
        <name>chlorophyll a</name>
        <dbReference type="ChEBI" id="CHEBI:58416"/>
        <label>1</label>
    </ligand>
</feature>
<feature type="binding site" evidence="1">
    <location>
        <position position="86"/>
    </location>
    <ligand>
        <name>chlorophyll a</name>
        <dbReference type="ChEBI" id="CHEBI:58416"/>
        <label>1</label>
    </ligand>
</feature>
<feature type="binding site" description="axial binding residue" evidence="3">
    <location>
        <position position="99"/>
    </location>
    <ligand>
        <name>chlorophyll a</name>
        <dbReference type="ChEBI" id="CHEBI:58416"/>
        <label>1</label>
    </ligand>
    <ligandPart>
        <name>Mg</name>
        <dbReference type="ChEBI" id="CHEBI:25107"/>
    </ligandPart>
</feature>
<feature type="binding site" description="axial binding residue" evidence="3">
    <location>
        <position position="102"/>
    </location>
    <ligand>
        <name>chlorophyll a</name>
        <dbReference type="ChEBI" id="CHEBI:58416"/>
        <label>2</label>
    </ligand>
    <ligandPart>
        <name>Mg</name>
        <dbReference type="ChEBI" id="CHEBI:25107"/>
    </ligandPart>
</feature>
<feature type="binding site" evidence="1">
    <location>
        <position position="104"/>
    </location>
    <ligand>
        <name>chlorophyll b</name>
        <dbReference type="ChEBI" id="CHEBI:61721"/>
        <label>2</label>
    </ligand>
</feature>
<feature type="binding site" evidence="1">
    <location>
        <position position="137"/>
    </location>
    <ligand>
        <name>chlorophyll a</name>
        <dbReference type="ChEBI" id="CHEBI:58416"/>
        <label>3</label>
    </ligand>
</feature>
<feature type="binding site" evidence="1">
    <location>
        <position position="147"/>
    </location>
    <ligand>
        <name>chlorophyll a</name>
        <dbReference type="ChEBI" id="CHEBI:58416"/>
        <label>3</label>
    </ligand>
</feature>
<feature type="binding site" description="axial binding residue" evidence="3">
    <location>
        <position position="153"/>
    </location>
    <ligand>
        <name>chlorophyll b</name>
        <dbReference type="ChEBI" id="CHEBI:61721"/>
        <label>2</label>
    </ligand>
    <ligandPart>
        <name>Mg</name>
        <dbReference type="ChEBI" id="CHEBI:25107"/>
    </ligandPart>
</feature>
<feature type="binding site" evidence="1">
    <location>
        <position position="157"/>
    </location>
    <ligand>
        <name>chlorophyll b</name>
        <dbReference type="ChEBI" id="CHEBI:61721"/>
        <label>3</label>
    </ligand>
</feature>
<feature type="binding site" evidence="1">
    <location>
        <position position="165"/>
    </location>
    <ligand>
        <name>chlorophyll b</name>
        <dbReference type="ChEBI" id="CHEBI:61721"/>
        <label>4</label>
    </ligand>
</feature>
<feature type="binding site" evidence="2">
    <location>
        <position position="165"/>
    </location>
    <ligand>
        <name>chlorophyll b</name>
        <dbReference type="ChEBI" id="CHEBI:61721"/>
        <label>5</label>
    </ligand>
</feature>
<feature type="binding site" description="axial binding residue" evidence="3">
    <location>
        <position position="173"/>
    </location>
    <ligand>
        <name>chlorophyll b</name>
        <dbReference type="ChEBI" id="CHEBI:61721"/>
        <label>3</label>
    </ligand>
    <ligandPart>
        <name>Mg</name>
        <dbReference type="ChEBI" id="CHEBI:25107"/>
    </ligandPart>
</feature>
<feature type="binding site" evidence="1">
    <location>
        <position position="176"/>
    </location>
    <ligand>
        <name>chlorophyll b</name>
        <dbReference type="ChEBI" id="CHEBI:61721"/>
        <label>4</label>
    </ligand>
</feature>
<feature type="binding site" evidence="1">
    <location>
        <position position="182"/>
    </location>
    <ligand>
        <name>chlorophyll b</name>
        <dbReference type="ChEBI" id="CHEBI:61721"/>
        <label>2</label>
    </ligand>
</feature>
<feature type="binding site" evidence="1">
    <location>
        <position position="213"/>
    </location>
    <ligand>
        <name>chlorophyll a</name>
        <dbReference type="ChEBI" id="CHEBI:58416"/>
        <label>5</label>
    </ligand>
</feature>
<feature type="binding site" description="axial binding residue" evidence="3">
    <location>
        <position position="214"/>
    </location>
    <ligand>
        <name>chlorophyll a</name>
        <dbReference type="ChEBI" id="CHEBI:58416"/>
        <label>3</label>
    </ligand>
    <ligandPart>
        <name>Mg</name>
        <dbReference type="ChEBI" id="CHEBI:25107"/>
    </ligandPart>
</feature>
<feature type="binding site" description="axial binding residue" evidence="3">
    <location>
        <position position="217"/>
    </location>
    <ligand>
        <name>chlorophyll a</name>
        <dbReference type="ChEBI" id="CHEBI:58416"/>
        <label>4</label>
    </ligand>
    <ligandPart>
        <name>Mg</name>
        <dbReference type="ChEBI" id="CHEBI:25107"/>
    </ligandPart>
</feature>
<feature type="binding site" evidence="1">
    <location>
        <position position="219"/>
    </location>
    <ligand>
        <name>chlorophyll a</name>
        <dbReference type="ChEBI" id="CHEBI:58416"/>
        <label>1</label>
    </ligand>
</feature>
<feature type="binding site" description="axial binding residue" evidence="3">
    <location>
        <position position="231"/>
    </location>
    <ligand>
        <name>chlorophyll a</name>
        <dbReference type="ChEBI" id="CHEBI:58416"/>
        <label>5</label>
    </ligand>
    <ligandPart>
        <name>Mg</name>
        <dbReference type="ChEBI" id="CHEBI:25107"/>
    </ligandPart>
</feature>
<feature type="binding site" description="axial binding residue" evidence="3">
    <location>
        <position position="246"/>
    </location>
    <ligand>
        <name>chlorophyll a</name>
        <dbReference type="ChEBI" id="CHEBI:58416"/>
        <label>6</label>
    </ligand>
    <ligandPart>
        <name>Mg</name>
        <dbReference type="ChEBI" id="CHEBI:25107"/>
    </ligandPart>
</feature>
<feature type="binding site" evidence="1">
    <location>
        <position position="255"/>
    </location>
    <ligand>
        <name>chlorophyll a</name>
        <dbReference type="ChEBI" id="CHEBI:58416"/>
        <label>6</label>
    </ligand>
</feature>
<feature type="binding site" evidence="1">
    <location>
        <position position="262"/>
    </location>
    <ligand>
        <name>chlorophyll b</name>
        <dbReference type="ChEBI" id="CHEBI:61721"/>
        <label>5</label>
    </ligand>
</feature>
<feature type="modified residue" description="N2-acetylarginine" evidence="1">
    <location>
        <position position="35"/>
    </location>
</feature>
<feature type="modified residue" description="Phosphothreonine" evidence="1">
    <location>
        <position position="37"/>
    </location>
</feature>
<gene>
    <name type="primary">WHAB1.6</name>
</gene>
<sequence length="266" mass="28264">MAATTMSLSSSSFAGKAVKNLPSSALIGDARVNMRKTAAKAKQVSSSSPWYGSDRVLYLGPLSGEPPSYLTGEFPGDYGWDTAGLSADPETFAKNRELEVIHCRWAMLGALGCVFPELLARNGVKFGEAGWFKAGSQIFSDGGLDYLGNPSLVHAQSLLAIWACQVVLMGAVEGYRIAGGPLGEIVDPLYPGGSFDPLGLAERPQAFAELKVKEIKNGRLAMFSMFGFFVQAIVTGKGPLEDLADHIADPVNNNAWLIATNFVPGK</sequence>
<protein>
    <recommendedName>
        <fullName>Chlorophyll a-b binding protein, chloroplastic</fullName>
    </recommendedName>
    <alternativeName>
        <fullName>LHCII type I CAB</fullName>
        <shortName>LHCP</shortName>
    </alternativeName>
</protein>
<comment type="function">
    <text>The light-harvesting complex (LHC) functions as a light receptor, it captures and delivers excitation energy to photosystems with which it is closely associated.</text>
</comment>
<comment type="cofactor">
    <text evidence="1">Binds at least 14 chlorophylls (8 Chl-a and 6 Chl-b) and carotenoids such as lutein and neoxanthin.</text>
</comment>
<comment type="subunit">
    <text>The LHC complex consists of chlorophyll a-b binding proteins.</text>
</comment>
<comment type="subcellular location">
    <subcellularLocation>
        <location>Plastid</location>
        <location>Chloroplast thylakoid membrane</location>
        <topology>Multi-pass membrane protein</topology>
    </subcellularLocation>
</comment>
<comment type="domain">
    <text>The N-terminus of the protein extends into the stroma where it is involved with adhesion of granal membranes and post-translational modifications; both are believed to mediate the distribution of excitation energy between photosystems I and II.</text>
</comment>
<comment type="PTM">
    <text evidence="1">Photoregulated by reversible phosphorylation of its threonine residues.</text>
</comment>
<comment type="similarity">
    <text evidence="5">Belongs to the light-harvesting chlorophyll a/b-binding (LHC) protein family.</text>
</comment>
<reference key="1">
    <citation type="journal article" date="1985" name="Mol. Cell. Biol.">
        <title>Structure and developmental regulation of a wheat gene encoding the major chlorophyll a/b-binding polypeptide.</title>
        <authorList>
            <person name="Lamppa G.K."/>
            <person name="Morelli G."/>
            <person name="Chua N.-H."/>
        </authorList>
    </citation>
    <scope>NUCLEOTIDE SEQUENCE [GENOMIC DNA]</scope>
</reference>
<keyword id="KW-0007">Acetylation</keyword>
<keyword id="KW-0148">Chlorophyll</keyword>
<keyword id="KW-0150">Chloroplast</keyword>
<keyword id="KW-0157">Chromophore</keyword>
<keyword id="KW-0460">Magnesium</keyword>
<keyword id="KW-0472">Membrane</keyword>
<keyword id="KW-0479">Metal-binding</keyword>
<keyword id="KW-0597">Phosphoprotein</keyword>
<keyword id="KW-0602">Photosynthesis</keyword>
<keyword id="KW-0603">Photosystem I</keyword>
<keyword id="KW-0604">Photosystem II</keyword>
<keyword id="KW-0934">Plastid</keyword>
<keyword id="KW-1185">Reference proteome</keyword>
<keyword id="KW-0793">Thylakoid</keyword>
<keyword id="KW-0809">Transit peptide</keyword>
<keyword id="KW-0812">Transmembrane</keyword>
<keyword id="KW-1133">Transmembrane helix</keyword>
<dbReference type="EMBL" id="M10144">
    <property type="protein sequence ID" value="AAA34260.1"/>
    <property type="molecule type" value="Genomic_DNA"/>
</dbReference>
<dbReference type="PIR" id="A23755">
    <property type="entry name" value="CDWT"/>
</dbReference>
<dbReference type="SMR" id="P04784"/>
<dbReference type="STRING" id="4565.P04784"/>
<dbReference type="PaxDb" id="4565-Traes_1BL_D2EDF576B.1"/>
<dbReference type="eggNOG" id="ENOG502QPU1">
    <property type="taxonomic scope" value="Eukaryota"/>
</dbReference>
<dbReference type="Proteomes" id="UP000019116">
    <property type="component" value="Unplaced"/>
</dbReference>
<dbReference type="ExpressionAtlas" id="P04784">
    <property type="expression patterns" value="baseline and differential"/>
</dbReference>
<dbReference type="GO" id="GO:0009535">
    <property type="term" value="C:chloroplast thylakoid membrane"/>
    <property type="evidence" value="ECO:0000318"/>
    <property type="project" value="GO_Central"/>
</dbReference>
<dbReference type="GO" id="GO:0009522">
    <property type="term" value="C:photosystem I"/>
    <property type="evidence" value="ECO:0007669"/>
    <property type="project" value="UniProtKB-KW"/>
</dbReference>
<dbReference type="GO" id="GO:0009523">
    <property type="term" value="C:photosystem II"/>
    <property type="evidence" value="ECO:0007669"/>
    <property type="project" value="UniProtKB-KW"/>
</dbReference>
<dbReference type="GO" id="GO:0016168">
    <property type="term" value="F:chlorophyll binding"/>
    <property type="evidence" value="ECO:0007669"/>
    <property type="project" value="UniProtKB-KW"/>
</dbReference>
<dbReference type="GO" id="GO:0046872">
    <property type="term" value="F:metal ion binding"/>
    <property type="evidence" value="ECO:0007669"/>
    <property type="project" value="UniProtKB-KW"/>
</dbReference>
<dbReference type="GO" id="GO:0009768">
    <property type="term" value="P:photosynthesis, light harvesting in photosystem I"/>
    <property type="evidence" value="ECO:0000318"/>
    <property type="project" value="GO_Central"/>
</dbReference>
<dbReference type="GO" id="GO:0009416">
    <property type="term" value="P:response to light stimulus"/>
    <property type="evidence" value="ECO:0000318"/>
    <property type="project" value="GO_Central"/>
</dbReference>
<dbReference type="FunFam" id="1.10.3460.10:FF:000001">
    <property type="entry name" value="Chlorophyll a-b binding protein, chloroplastic"/>
    <property type="match status" value="1"/>
</dbReference>
<dbReference type="Gene3D" id="1.10.3460.10">
    <property type="entry name" value="Chlorophyll a/b binding protein domain"/>
    <property type="match status" value="1"/>
</dbReference>
<dbReference type="InterPro" id="IPR001344">
    <property type="entry name" value="Chloro_AB-bd_pln"/>
</dbReference>
<dbReference type="InterPro" id="IPR022796">
    <property type="entry name" value="Chloroa_b-bind"/>
</dbReference>
<dbReference type="PANTHER" id="PTHR21649">
    <property type="entry name" value="CHLOROPHYLL A/B BINDING PROTEIN"/>
    <property type="match status" value="1"/>
</dbReference>
<dbReference type="Pfam" id="PF00504">
    <property type="entry name" value="Chloroa_b-bind"/>
    <property type="match status" value="1"/>
</dbReference>
<dbReference type="SUPFAM" id="SSF103511">
    <property type="entry name" value="Chlorophyll a-b binding protein"/>
    <property type="match status" value="1"/>
</dbReference>